<comment type="function">
    <text evidence="1">An essential GTPase that binds both GDP and GTP, with rapid nucleotide exchange. Plays a role in 16S rRNA processing and 30S ribosomal subunit biogenesis and possibly also in cell cycle regulation and energy metabolism.</text>
</comment>
<comment type="subunit">
    <text evidence="1">Monomer.</text>
</comment>
<comment type="subcellular location">
    <subcellularLocation>
        <location>Cytoplasm</location>
    </subcellularLocation>
    <subcellularLocation>
        <location evidence="1">Cell membrane</location>
        <topology evidence="1">Peripheral membrane protein</topology>
    </subcellularLocation>
</comment>
<comment type="similarity">
    <text evidence="1 2">Belongs to the TRAFAC class TrmE-Era-EngA-EngB-Septin-like GTPase superfamily. Era GTPase family.</text>
</comment>
<accession>A7X2W5</accession>
<proteinExistence type="inferred from homology"/>
<name>ERA_STAA1</name>
<evidence type="ECO:0000255" key="1">
    <source>
        <dbReference type="HAMAP-Rule" id="MF_00367"/>
    </source>
</evidence>
<evidence type="ECO:0000255" key="2">
    <source>
        <dbReference type="PROSITE-ProRule" id="PRU01050"/>
    </source>
</evidence>
<reference key="1">
    <citation type="journal article" date="2008" name="Antimicrob. Agents Chemother.">
        <title>Mutated response regulator graR is responsible for phenotypic conversion of Staphylococcus aureus from heterogeneous vancomycin-intermediate resistance to vancomycin-intermediate resistance.</title>
        <authorList>
            <person name="Neoh H.-M."/>
            <person name="Cui L."/>
            <person name="Yuzawa H."/>
            <person name="Takeuchi F."/>
            <person name="Matsuo M."/>
            <person name="Hiramatsu K."/>
        </authorList>
    </citation>
    <scope>NUCLEOTIDE SEQUENCE [LARGE SCALE GENOMIC DNA]</scope>
    <source>
        <strain>Mu3 / ATCC 700698</strain>
    </source>
</reference>
<protein>
    <recommendedName>
        <fullName evidence="1">GTPase Era</fullName>
    </recommendedName>
</protein>
<organism>
    <name type="scientific">Staphylococcus aureus (strain Mu3 / ATCC 700698)</name>
    <dbReference type="NCBI Taxonomy" id="418127"/>
    <lineage>
        <taxon>Bacteria</taxon>
        <taxon>Bacillati</taxon>
        <taxon>Bacillota</taxon>
        <taxon>Bacilli</taxon>
        <taxon>Bacillales</taxon>
        <taxon>Staphylococcaceae</taxon>
        <taxon>Staphylococcus</taxon>
    </lineage>
</organism>
<sequence length="299" mass="34329">MTEHKSGFVSIIGRPNVGKSTFVNRVIGHKIAIMSDKAQTTRNKIQGVMTRDDAQIIFIDTPGIHKPKHKLGDYMMKVAKNTLSEIDAIMFMVNANEEIGRGDEYIIEMLKNVKTPVFLVLNKIDLVHPDELMPKIEEYQSYMDFTEIVPISALEGLNVDHFIDVLKTYLPEGPKYYPDDQISDHPEQFVVGEIIREKILHLTSEEIPHAIGVNVDRMVKESEDRVHIEATIYVERDSQKGIVIGKGGKKLKEVGKRARRDIEMLLGSKVYLELWVKVQRDWRNKVNFIRQIGYVEDQD</sequence>
<dbReference type="EMBL" id="AP009324">
    <property type="protein sequence ID" value="BAF78437.1"/>
    <property type="molecule type" value="Genomic_DNA"/>
</dbReference>
<dbReference type="RefSeq" id="WP_000134765.1">
    <property type="nucleotide sequence ID" value="NZ_CTYB01000003.1"/>
</dbReference>
<dbReference type="SMR" id="A7X2W5"/>
<dbReference type="KEGG" id="saw:SAHV_1554"/>
<dbReference type="HOGENOM" id="CLU_038009_1_0_9"/>
<dbReference type="GO" id="GO:0005829">
    <property type="term" value="C:cytosol"/>
    <property type="evidence" value="ECO:0007669"/>
    <property type="project" value="TreeGrafter"/>
</dbReference>
<dbReference type="GO" id="GO:0005886">
    <property type="term" value="C:plasma membrane"/>
    <property type="evidence" value="ECO:0007669"/>
    <property type="project" value="UniProtKB-SubCell"/>
</dbReference>
<dbReference type="GO" id="GO:0005525">
    <property type="term" value="F:GTP binding"/>
    <property type="evidence" value="ECO:0007669"/>
    <property type="project" value="UniProtKB-UniRule"/>
</dbReference>
<dbReference type="GO" id="GO:0003924">
    <property type="term" value="F:GTPase activity"/>
    <property type="evidence" value="ECO:0007669"/>
    <property type="project" value="UniProtKB-UniRule"/>
</dbReference>
<dbReference type="GO" id="GO:0043024">
    <property type="term" value="F:ribosomal small subunit binding"/>
    <property type="evidence" value="ECO:0007669"/>
    <property type="project" value="TreeGrafter"/>
</dbReference>
<dbReference type="GO" id="GO:0070181">
    <property type="term" value="F:small ribosomal subunit rRNA binding"/>
    <property type="evidence" value="ECO:0007669"/>
    <property type="project" value="UniProtKB-UniRule"/>
</dbReference>
<dbReference type="GO" id="GO:0000028">
    <property type="term" value="P:ribosomal small subunit assembly"/>
    <property type="evidence" value="ECO:0007669"/>
    <property type="project" value="TreeGrafter"/>
</dbReference>
<dbReference type="CDD" id="cd04163">
    <property type="entry name" value="Era"/>
    <property type="match status" value="1"/>
</dbReference>
<dbReference type="CDD" id="cd22534">
    <property type="entry name" value="KH-II_Era"/>
    <property type="match status" value="1"/>
</dbReference>
<dbReference type="FunFam" id="3.30.300.20:FF:000003">
    <property type="entry name" value="GTPase Era"/>
    <property type="match status" value="1"/>
</dbReference>
<dbReference type="FunFam" id="3.40.50.300:FF:000094">
    <property type="entry name" value="GTPase Era"/>
    <property type="match status" value="1"/>
</dbReference>
<dbReference type="Gene3D" id="3.30.300.20">
    <property type="match status" value="1"/>
</dbReference>
<dbReference type="Gene3D" id="3.40.50.300">
    <property type="entry name" value="P-loop containing nucleotide triphosphate hydrolases"/>
    <property type="match status" value="1"/>
</dbReference>
<dbReference type="HAMAP" id="MF_00367">
    <property type="entry name" value="GTPase_Era"/>
    <property type="match status" value="1"/>
</dbReference>
<dbReference type="InterPro" id="IPR030388">
    <property type="entry name" value="G_ERA_dom"/>
</dbReference>
<dbReference type="InterPro" id="IPR006073">
    <property type="entry name" value="GTP-bd"/>
</dbReference>
<dbReference type="InterPro" id="IPR005662">
    <property type="entry name" value="GTPase_Era-like"/>
</dbReference>
<dbReference type="InterPro" id="IPR015946">
    <property type="entry name" value="KH_dom-like_a/b"/>
</dbReference>
<dbReference type="InterPro" id="IPR004044">
    <property type="entry name" value="KH_dom_type_2"/>
</dbReference>
<dbReference type="InterPro" id="IPR009019">
    <property type="entry name" value="KH_sf_prok-type"/>
</dbReference>
<dbReference type="InterPro" id="IPR027417">
    <property type="entry name" value="P-loop_NTPase"/>
</dbReference>
<dbReference type="InterPro" id="IPR005225">
    <property type="entry name" value="Small_GTP-bd"/>
</dbReference>
<dbReference type="NCBIfam" id="TIGR00436">
    <property type="entry name" value="era"/>
    <property type="match status" value="1"/>
</dbReference>
<dbReference type="NCBIfam" id="NF000908">
    <property type="entry name" value="PRK00089.1"/>
    <property type="match status" value="1"/>
</dbReference>
<dbReference type="NCBIfam" id="TIGR00231">
    <property type="entry name" value="small_GTP"/>
    <property type="match status" value="1"/>
</dbReference>
<dbReference type="PANTHER" id="PTHR42698">
    <property type="entry name" value="GTPASE ERA"/>
    <property type="match status" value="1"/>
</dbReference>
<dbReference type="PANTHER" id="PTHR42698:SF1">
    <property type="entry name" value="GTPASE ERA, MITOCHONDRIAL"/>
    <property type="match status" value="1"/>
</dbReference>
<dbReference type="Pfam" id="PF07650">
    <property type="entry name" value="KH_2"/>
    <property type="match status" value="1"/>
</dbReference>
<dbReference type="Pfam" id="PF01926">
    <property type="entry name" value="MMR_HSR1"/>
    <property type="match status" value="1"/>
</dbReference>
<dbReference type="SUPFAM" id="SSF52540">
    <property type="entry name" value="P-loop containing nucleoside triphosphate hydrolases"/>
    <property type="match status" value="1"/>
</dbReference>
<dbReference type="SUPFAM" id="SSF54814">
    <property type="entry name" value="Prokaryotic type KH domain (KH-domain type II)"/>
    <property type="match status" value="1"/>
</dbReference>
<dbReference type="PROSITE" id="PS51713">
    <property type="entry name" value="G_ERA"/>
    <property type="match status" value="1"/>
</dbReference>
<dbReference type="PROSITE" id="PS50823">
    <property type="entry name" value="KH_TYPE_2"/>
    <property type="match status" value="1"/>
</dbReference>
<keyword id="KW-1003">Cell membrane</keyword>
<keyword id="KW-0963">Cytoplasm</keyword>
<keyword id="KW-0342">GTP-binding</keyword>
<keyword id="KW-0472">Membrane</keyword>
<keyword id="KW-0547">Nucleotide-binding</keyword>
<keyword id="KW-0690">Ribosome biogenesis</keyword>
<keyword id="KW-0694">RNA-binding</keyword>
<keyword id="KW-0699">rRNA-binding</keyword>
<feature type="chain" id="PRO_1000079740" description="GTPase Era">
    <location>
        <begin position="1"/>
        <end position="299"/>
    </location>
</feature>
<feature type="domain" description="Era-type G" evidence="2">
    <location>
        <begin position="5"/>
        <end position="172"/>
    </location>
</feature>
<feature type="domain" description="KH type-2" evidence="1">
    <location>
        <begin position="203"/>
        <end position="280"/>
    </location>
</feature>
<feature type="region of interest" description="G1" evidence="2">
    <location>
        <begin position="13"/>
        <end position="20"/>
    </location>
</feature>
<feature type="region of interest" description="G2" evidence="2">
    <location>
        <begin position="39"/>
        <end position="43"/>
    </location>
</feature>
<feature type="region of interest" description="G3" evidence="2">
    <location>
        <begin position="60"/>
        <end position="63"/>
    </location>
</feature>
<feature type="region of interest" description="G4" evidence="2">
    <location>
        <begin position="122"/>
        <end position="125"/>
    </location>
</feature>
<feature type="region of interest" description="G5" evidence="2">
    <location>
        <begin position="151"/>
        <end position="153"/>
    </location>
</feature>
<feature type="binding site" evidence="1">
    <location>
        <begin position="13"/>
        <end position="20"/>
    </location>
    <ligand>
        <name>GTP</name>
        <dbReference type="ChEBI" id="CHEBI:37565"/>
    </ligand>
</feature>
<feature type="binding site" evidence="1">
    <location>
        <begin position="60"/>
        <end position="64"/>
    </location>
    <ligand>
        <name>GTP</name>
        <dbReference type="ChEBI" id="CHEBI:37565"/>
    </ligand>
</feature>
<feature type="binding site" evidence="1">
    <location>
        <begin position="122"/>
        <end position="125"/>
    </location>
    <ligand>
        <name>GTP</name>
        <dbReference type="ChEBI" id="CHEBI:37565"/>
    </ligand>
</feature>
<gene>
    <name evidence="1" type="primary">era</name>
    <name type="ordered locus">SAHV_1554</name>
</gene>